<comment type="function">
    <text evidence="1 2">Subunit 8, of the mitochondrial membrane ATP synthase complex (F(1)F(0) ATP synthase or Complex V) that produces ATP from ADP in the presence of a proton gradient across the membrane which is generated by electron transport complexes of the respiratory chain. ATP synthase complex consist of a soluble F(1) head domain - the catalytic core - and a membrane F(1) domain - the membrane proton channel. These two domains are linked by a central stalk rotating inside the F(1) region and a stationary peripheral stalk. During catalysis, ATP synthesis in the catalytic domain of F(1) is coupled via a rotary mechanism of the central stalk subunits to proton translocation (By similarity). In vivo, can only synthesize ATP although its ATP hydrolase activity can be activated artificially in vitro (By similarity). Part of the complex F(0) domain (By similarity).</text>
</comment>
<comment type="subunit">
    <text evidence="1">Component of the ATP synthase complex composed at least of ATP5F1A/subunit alpha, ATP5F1B/subunit beta, ATP5MC1/subunit c (homooctomer), MT-ATP6/subunit a, MT-ATP8/subunit 8, ATP5ME/subunit e, ATP5MF/subunit f, ATP5MG/subunit g, ATP5MK/subunit k, ATP5MJ/subunit j, ATP5F1C/subunit gamma, ATP5F1D/subunit delta, ATP5F1E/subunit epsilon, ATP5PF/subunit F6, ATP5PB/subunit b, ATP5PD/subunit d, ATP5PO/subunit OSCP. ATP synthase complex consists of a soluble F(1) head domain (subunits alpha(3) and beta(3)) - the catalytic core - and a membrane F(0) domain - the membrane proton channel (subunits c, a, 8, e, f, g, k and j). These two domains are linked by a central stalk (subunits gamma, delta, and epsilon) rotating inside the F1 region and a stationary peripheral stalk (subunits F6, b, d, and OSCP).</text>
</comment>
<comment type="subcellular location">
    <subcellularLocation>
        <location>Mitochondrion membrane</location>
        <topology>Single-pass membrane protein</topology>
    </subcellularLocation>
</comment>
<comment type="similarity">
    <text evidence="4">Belongs to the ATPase protein 8 family.</text>
</comment>
<gene>
    <name evidence="1" type="primary">MT-ATP8</name>
    <name type="synonym">ATP8</name>
    <name type="synonym">ATPASE8</name>
    <name type="synonym">MTATP8</name>
</gene>
<feature type="chain" id="PRO_0000195532" description="ATP synthase F(0) complex subunit 8">
    <location>
        <begin position="1"/>
        <end position="55"/>
    </location>
</feature>
<feature type="transmembrane region" description="Helical" evidence="3">
    <location>
        <begin position="10"/>
        <end position="32"/>
    </location>
</feature>
<evidence type="ECO:0000250" key="1">
    <source>
        <dbReference type="UniProtKB" id="P03928"/>
    </source>
</evidence>
<evidence type="ECO:0000250" key="2">
    <source>
        <dbReference type="UniProtKB" id="P19483"/>
    </source>
</evidence>
<evidence type="ECO:0000255" key="3"/>
<evidence type="ECO:0000305" key="4"/>
<geneLocation type="mitochondrion"/>
<protein>
    <recommendedName>
        <fullName evidence="1">ATP synthase F(0) complex subunit 8</fullName>
    </recommendedName>
    <alternativeName>
        <fullName>A6L</fullName>
    </alternativeName>
    <alternativeName>
        <fullName>F-ATPase subunit 8</fullName>
    </alternativeName>
</protein>
<keyword id="KW-0066">ATP synthesis</keyword>
<keyword id="KW-0138">CF(0)</keyword>
<keyword id="KW-0375">Hydrogen ion transport</keyword>
<keyword id="KW-0406">Ion transport</keyword>
<keyword id="KW-0472">Membrane</keyword>
<keyword id="KW-0496">Mitochondrion</keyword>
<keyword id="KW-0812">Transmembrane</keyword>
<keyword id="KW-1133">Transmembrane helix</keyword>
<keyword id="KW-0813">Transport</keyword>
<reference key="1">
    <citation type="journal article" date="1999" name="Mol. Biol. Evol.">
        <title>Phylogenetic relationships of the enigmatic hoatzin (Opisthocomus hoazin) resolved using mitochondrial and nuclear gene sequences.</title>
        <authorList>
            <person name="Hughes J.M."/>
            <person name="Baker A.J."/>
        </authorList>
    </citation>
    <scope>NUCLEOTIDE SEQUENCE [GENOMIC DNA]</scope>
</reference>
<accession>Q9TBJ1</accession>
<name>ATP8_GUIGU</name>
<proteinExistence type="inferred from homology"/>
<sequence length="55" mass="6574">MPQLNPNPWFFTMLTTWLTFLLLIQPKLLSFIMTNPPINKSSKHTKTPSWTWPWT</sequence>
<dbReference type="EMBL" id="AF168034">
    <property type="protein sequence ID" value="AAD56462.1"/>
    <property type="molecule type" value="Genomic_DNA"/>
</dbReference>
<dbReference type="SMR" id="Q9TBJ1"/>
<dbReference type="GO" id="GO:0031966">
    <property type="term" value="C:mitochondrial membrane"/>
    <property type="evidence" value="ECO:0007669"/>
    <property type="project" value="UniProtKB-SubCell"/>
</dbReference>
<dbReference type="GO" id="GO:0045259">
    <property type="term" value="C:proton-transporting ATP synthase complex"/>
    <property type="evidence" value="ECO:0007669"/>
    <property type="project" value="UniProtKB-KW"/>
</dbReference>
<dbReference type="GO" id="GO:0015078">
    <property type="term" value="F:proton transmembrane transporter activity"/>
    <property type="evidence" value="ECO:0007669"/>
    <property type="project" value="InterPro"/>
</dbReference>
<dbReference type="GO" id="GO:0015986">
    <property type="term" value="P:proton motive force-driven ATP synthesis"/>
    <property type="evidence" value="ECO:0007669"/>
    <property type="project" value="InterPro"/>
</dbReference>
<dbReference type="InterPro" id="IPR001421">
    <property type="entry name" value="ATP8_metazoa"/>
</dbReference>
<dbReference type="InterPro" id="IPR050635">
    <property type="entry name" value="ATPase_protein_8"/>
</dbReference>
<dbReference type="PANTHER" id="PTHR39937">
    <property type="entry name" value="ATP SYNTHASE PROTEIN 8"/>
    <property type="match status" value="1"/>
</dbReference>
<dbReference type="PANTHER" id="PTHR39937:SF1">
    <property type="entry name" value="ATP SYNTHASE PROTEIN 8"/>
    <property type="match status" value="1"/>
</dbReference>
<dbReference type="Pfam" id="PF00895">
    <property type="entry name" value="ATP-synt_8"/>
    <property type="match status" value="1"/>
</dbReference>
<organism>
    <name type="scientific">Guira guira</name>
    <name type="common">Guira cuckoo</name>
    <dbReference type="NCBI Taxonomy" id="30392"/>
    <lineage>
        <taxon>Eukaryota</taxon>
        <taxon>Metazoa</taxon>
        <taxon>Chordata</taxon>
        <taxon>Craniata</taxon>
        <taxon>Vertebrata</taxon>
        <taxon>Euteleostomi</taxon>
        <taxon>Archelosauria</taxon>
        <taxon>Archosauria</taxon>
        <taxon>Dinosauria</taxon>
        <taxon>Saurischia</taxon>
        <taxon>Theropoda</taxon>
        <taxon>Coelurosauria</taxon>
        <taxon>Aves</taxon>
        <taxon>Neognathae</taxon>
        <taxon>Neoaves</taxon>
        <taxon>Otidimorphae</taxon>
        <taxon>Cuculiformes</taxon>
        <taxon>Crotophagidae</taxon>
        <taxon>Guira</taxon>
    </lineage>
</organism>